<accession>Q6GZX1</accession>
<evidence type="ECO:0000255" key="1"/>
<evidence type="ECO:0000256" key="2">
    <source>
        <dbReference type="SAM" id="MobiDB-lite"/>
    </source>
</evidence>
<evidence type="ECO:0000305" key="3"/>
<name>004R_FRG3G</name>
<reference key="1">
    <citation type="journal article" date="2004" name="Virology">
        <title>Comparative genomic analyses of frog virus 3, type species of the genus Ranavirus (family Iridoviridae).</title>
        <authorList>
            <person name="Tan W.G."/>
            <person name="Barkman T.J."/>
            <person name="Gregory Chinchar V."/>
            <person name="Essani K."/>
        </authorList>
    </citation>
    <scope>NUCLEOTIDE SEQUENCE [LARGE SCALE GENOMIC DNA]</scope>
</reference>
<comment type="subcellular location">
    <subcellularLocation>
        <location evidence="3">Host membrane</location>
        <topology evidence="3">Single-pass membrane protein</topology>
    </subcellularLocation>
</comment>
<gene>
    <name type="ORF">FV3-004R</name>
</gene>
<proteinExistence type="predicted"/>
<organismHost>
    <name type="scientific">Dryophytes versicolor</name>
    <name type="common">chameleon treefrog</name>
    <dbReference type="NCBI Taxonomy" id="30343"/>
</organismHost>
<organismHost>
    <name type="scientific">Lithobates pipiens</name>
    <name type="common">Northern leopard frog</name>
    <name type="synonym">Rana pipiens</name>
    <dbReference type="NCBI Taxonomy" id="8404"/>
</organismHost>
<organismHost>
    <name type="scientific">Lithobates sylvaticus</name>
    <name type="common">Wood frog</name>
    <name type="synonym">Rana sylvatica</name>
    <dbReference type="NCBI Taxonomy" id="45438"/>
</organismHost>
<organismHost>
    <name type="scientific">Notophthalmus viridescens</name>
    <name type="common">Eastern newt</name>
    <name type="synonym">Triturus viridescens</name>
    <dbReference type="NCBI Taxonomy" id="8316"/>
</organismHost>
<feature type="chain" id="PRO_0000410528" description="Uncharacterized protein 004R">
    <location>
        <begin position="1"/>
        <end position="60"/>
    </location>
</feature>
<feature type="transmembrane region" description="Helical" evidence="1">
    <location>
        <begin position="14"/>
        <end position="34"/>
    </location>
</feature>
<feature type="region of interest" description="Disordered" evidence="2">
    <location>
        <begin position="38"/>
        <end position="60"/>
    </location>
</feature>
<feature type="compositionally biased region" description="Polar residues" evidence="2">
    <location>
        <begin position="40"/>
        <end position="60"/>
    </location>
</feature>
<protein>
    <recommendedName>
        <fullName>Uncharacterized protein 004R</fullName>
    </recommendedName>
</protein>
<sequence>MNAKYDTDQGVGRMLFLGTIGLAVVVGGLMAYGYYYDGKTPSSGTSFHTASPSFSSRYRY</sequence>
<organism>
    <name type="scientific">Frog virus 3 (isolate Goorha)</name>
    <name type="common">FV-3</name>
    <dbReference type="NCBI Taxonomy" id="654924"/>
    <lineage>
        <taxon>Viruses</taxon>
        <taxon>Varidnaviria</taxon>
        <taxon>Bamfordvirae</taxon>
        <taxon>Nucleocytoviricota</taxon>
        <taxon>Megaviricetes</taxon>
        <taxon>Pimascovirales</taxon>
        <taxon>Iridoviridae</taxon>
        <taxon>Alphairidovirinae</taxon>
        <taxon>Ranavirus</taxon>
        <taxon>Frog virus 3</taxon>
    </lineage>
</organism>
<keyword id="KW-1043">Host membrane</keyword>
<keyword id="KW-0472">Membrane</keyword>
<keyword id="KW-1185">Reference proteome</keyword>
<keyword id="KW-0812">Transmembrane</keyword>
<keyword id="KW-1133">Transmembrane helix</keyword>
<dbReference type="EMBL" id="AY548484">
    <property type="protein sequence ID" value="AAT09663.1"/>
    <property type="molecule type" value="Genomic_DNA"/>
</dbReference>
<dbReference type="RefSeq" id="YP_031582.1">
    <property type="nucleotide sequence ID" value="NC_005946.1"/>
</dbReference>
<dbReference type="SMR" id="Q6GZX1"/>
<dbReference type="KEGG" id="vg:2947776"/>
<dbReference type="Proteomes" id="UP000008770">
    <property type="component" value="Segment"/>
</dbReference>
<dbReference type="GO" id="GO:0033644">
    <property type="term" value="C:host cell membrane"/>
    <property type="evidence" value="ECO:0007669"/>
    <property type="project" value="UniProtKB-SubCell"/>
</dbReference>
<dbReference type="GO" id="GO:0016020">
    <property type="term" value="C:membrane"/>
    <property type="evidence" value="ECO:0007669"/>
    <property type="project" value="UniProtKB-KW"/>
</dbReference>